<accession>A2RL76</accession>
<organism>
    <name type="scientific">Lactococcus lactis subsp. cremoris (strain MG1363)</name>
    <dbReference type="NCBI Taxonomy" id="416870"/>
    <lineage>
        <taxon>Bacteria</taxon>
        <taxon>Bacillati</taxon>
        <taxon>Bacillota</taxon>
        <taxon>Bacilli</taxon>
        <taxon>Lactobacillales</taxon>
        <taxon>Streptococcaceae</taxon>
        <taxon>Lactococcus</taxon>
        <taxon>Lactococcus cremoris subsp. cremoris</taxon>
    </lineage>
</organism>
<reference key="1">
    <citation type="journal article" date="2007" name="J. Bacteriol.">
        <title>The complete genome sequence of the lactic acid bacterial paradigm Lactococcus lactis subsp. cremoris MG1363.</title>
        <authorList>
            <person name="Wegmann U."/>
            <person name="O'Connell-Motherway M."/>
            <person name="Zomer A."/>
            <person name="Buist G."/>
            <person name="Shearman C."/>
            <person name="Canchaya C."/>
            <person name="Ventura M."/>
            <person name="Goesmann A."/>
            <person name="Gasson M.J."/>
            <person name="Kuipers O.P."/>
            <person name="van Sinderen D."/>
            <person name="Kok J."/>
        </authorList>
    </citation>
    <scope>NUCLEOTIDE SEQUENCE [LARGE SCALE GENOMIC DNA]</scope>
    <source>
        <strain>MG1363</strain>
    </source>
</reference>
<dbReference type="EC" id="3.6.5.n1" evidence="1"/>
<dbReference type="EMBL" id="AM406671">
    <property type="protein sequence ID" value="CAL98043.1"/>
    <property type="molecule type" value="Genomic_DNA"/>
</dbReference>
<dbReference type="RefSeq" id="WP_011835315.1">
    <property type="nucleotide sequence ID" value="NC_009004.1"/>
</dbReference>
<dbReference type="SMR" id="A2RL76"/>
<dbReference type="STRING" id="416870.llmg_1463"/>
<dbReference type="KEGG" id="llm:llmg_1463"/>
<dbReference type="eggNOG" id="COG0481">
    <property type="taxonomic scope" value="Bacteria"/>
</dbReference>
<dbReference type="HOGENOM" id="CLU_009995_3_3_9"/>
<dbReference type="OrthoDB" id="9801591at2"/>
<dbReference type="PhylomeDB" id="A2RL76"/>
<dbReference type="Proteomes" id="UP000000364">
    <property type="component" value="Chromosome"/>
</dbReference>
<dbReference type="GO" id="GO:0005886">
    <property type="term" value="C:plasma membrane"/>
    <property type="evidence" value="ECO:0007669"/>
    <property type="project" value="UniProtKB-SubCell"/>
</dbReference>
<dbReference type="GO" id="GO:0005525">
    <property type="term" value="F:GTP binding"/>
    <property type="evidence" value="ECO:0007669"/>
    <property type="project" value="UniProtKB-UniRule"/>
</dbReference>
<dbReference type="GO" id="GO:0003924">
    <property type="term" value="F:GTPase activity"/>
    <property type="evidence" value="ECO:0007669"/>
    <property type="project" value="UniProtKB-UniRule"/>
</dbReference>
<dbReference type="GO" id="GO:0043022">
    <property type="term" value="F:ribosome binding"/>
    <property type="evidence" value="ECO:0007669"/>
    <property type="project" value="UniProtKB-UniRule"/>
</dbReference>
<dbReference type="GO" id="GO:0003746">
    <property type="term" value="F:translation elongation factor activity"/>
    <property type="evidence" value="ECO:0007669"/>
    <property type="project" value="UniProtKB-UniRule"/>
</dbReference>
<dbReference type="GO" id="GO:0045727">
    <property type="term" value="P:positive regulation of translation"/>
    <property type="evidence" value="ECO:0007669"/>
    <property type="project" value="UniProtKB-UniRule"/>
</dbReference>
<dbReference type="CDD" id="cd03699">
    <property type="entry name" value="EF4_II"/>
    <property type="match status" value="1"/>
</dbReference>
<dbReference type="CDD" id="cd16260">
    <property type="entry name" value="EF4_III"/>
    <property type="match status" value="1"/>
</dbReference>
<dbReference type="CDD" id="cd01890">
    <property type="entry name" value="LepA"/>
    <property type="match status" value="1"/>
</dbReference>
<dbReference type="CDD" id="cd03709">
    <property type="entry name" value="lepA_C"/>
    <property type="match status" value="1"/>
</dbReference>
<dbReference type="FunFam" id="3.40.50.300:FF:000078">
    <property type="entry name" value="Elongation factor 4"/>
    <property type="match status" value="1"/>
</dbReference>
<dbReference type="FunFam" id="2.40.30.10:FF:000015">
    <property type="entry name" value="Translation factor GUF1, mitochondrial"/>
    <property type="match status" value="1"/>
</dbReference>
<dbReference type="FunFam" id="3.30.70.240:FF:000007">
    <property type="entry name" value="Translation factor GUF1, mitochondrial"/>
    <property type="match status" value="1"/>
</dbReference>
<dbReference type="FunFam" id="3.30.70.2570:FF:000001">
    <property type="entry name" value="Translation factor GUF1, mitochondrial"/>
    <property type="match status" value="1"/>
</dbReference>
<dbReference type="FunFam" id="3.30.70.870:FF:000004">
    <property type="entry name" value="Translation factor GUF1, mitochondrial"/>
    <property type="match status" value="1"/>
</dbReference>
<dbReference type="Gene3D" id="3.30.70.240">
    <property type="match status" value="1"/>
</dbReference>
<dbReference type="Gene3D" id="3.30.70.2570">
    <property type="entry name" value="Elongation factor 4, C-terminal domain"/>
    <property type="match status" value="1"/>
</dbReference>
<dbReference type="Gene3D" id="3.30.70.870">
    <property type="entry name" value="Elongation Factor G (Translational Gtpase), domain 3"/>
    <property type="match status" value="1"/>
</dbReference>
<dbReference type="Gene3D" id="3.40.50.300">
    <property type="entry name" value="P-loop containing nucleotide triphosphate hydrolases"/>
    <property type="match status" value="1"/>
</dbReference>
<dbReference type="Gene3D" id="2.40.30.10">
    <property type="entry name" value="Translation factors"/>
    <property type="match status" value="1"/>
</dbReference>
<dbReference type="HAMAP" id="MF_00071">
    <property type="entry name" value="LepA"/>
    <property type="match status" value="1"/>
</dbReference>
<dbReference type="InterPro" id="IPR006297">
    <property type="entry name" value="EF-4"/>
</dbReference>
<dbReference type="InterPro" id="IPR041095">
    <property type="entry name" value="EFG_II"/>
</dbReference>
<dbReference type="InterPro" id="IPR035647">
    <property type="entry name" value="EFG_III/V"/>
</dbReference>
<dbReference type="InterPro" id="IPR000640">
    <property type="entry name" value="EFG_V-like"/>
</dbReference>
<dbReference type="InterPro" id="IPR004161">
    <property type="entry name" value="EFTu-like_2"/>
</dbReference>
<dbReference type="InterPro" id="IPR031157">
    <property type="entry name" value="G_TR_CS"/>
</dbReference>
<dbReference type="InterPro" id="IPR038363">
    <property type="entry name" value="LepA_C_sf"/>
</dbReference>
<dbReference type="InterPro" id="IPR013842">
    <property type="entry name" value="LepA_CTD"/>
</dbReference>
<dbReference type="InterPro" id="IPR035654">
    <property type="entry name" value="LepA_IV"/>
</dbReference>
<dbReference type="InterPro" id="IPR027417">
    <property type="entry name" value="P-loop_NTPase"/>
</dbReference>
<dbReference type="InterPro" id="IPR005225">
    <property type="entry name" value="Small_GTP-bd"/>
</dbReference>
<dbReference type="InterPro" id="IPR000795">
    <property type="entry name" value="T_Tr_GTP-bd_dom"/>
</dbReference>
<dbReference type="InterPro" id="IPR009000">
    <property type="entry name" value="Transl_B-barrel_sf"/>
</dbReference>
<dbReference type="NCBIfam" id="TIGR01393">
    <property type="entry name" value="lepA"/>
    <property type="match status" value="1"/>
</dbReference>
<dbReference type="NCBIfam" id="TIGR00231">
    <property type="entry name" value="small_GTP"/>
    <property type="match status" value="1"/>
</dbReference>
<dbReference type="PANTHER" id="PTHR43512:SF4">
    <property type="entry name" value="TRANSLATION FACTOR GUF1 HOMOLOG, CHLOROPLASTIC"/>
    <property type="match status" value="1"/>
</dbReference>
<dbReference type="PANTHER" id="PTHR43512">
    <property type="entry name" value="TRANSLATION FACTOR GUF1-RELATED"/>
    <property type="match status" value="1"/>
</dbReference>
<dbReference type="Pfam" id="PF00679">
    <property type="entry name" value="EFG_C"/>
    <property type="match status" value="1"/>
</dbReference>
<dbReference type="Pfam" id="PF14492">
    <property type="entry name" value="EFG_III"/>
    <property type="match status" value="1"/>
</dbReference>
<dbReference type="Pfam" id="PF00009">
    <property type="entry name" value="GTP_EFTU"/>
    <property type="match status" value="1"/>
</dbReference>
<dbReference type="Pfam" id="PF03144">
    <property type="entry name" value="GTP_EFTU_D2"/>
    <property type="match status" value="1"/>
</dbReference>
<dbReference type="Pfam" id="PF06421">
    <property type="entry name" value="LepA_C"/>
    <property type="match status" value="1"/>
</dbReference>
<dbReference type="PRINTS" id="PR00315">
    <property type="entry name" value="ELONGATNFCT"/>
</dbReference>
<dbReference type="SMART" id="SM00838">
    <property type="entry name" value="EFG_C"/>
    <property type="match status" value="1"/>
</dbReference>
<dbReference type="SUPFAM" id="SSF54980">
    <property type="entry name" value="EF-G C-terminal domain-like"/>
    <property type="match status" value="2"/>
</dbReference>
<dbReference type="SUPFAM" id="SSF52540">
    <property type="entry name" value="P-loop containing nucleoside triphosphate hydrolases"/>
    <property type="match status" value="1"/>
</dbReference>
<dbReference type="SUPFAM" id="SSF50447">
    <property type="entry name" value="Translation proteins"/>
    <property type="match status" value="1"/>
</dbReference>
<dbReference type="PROSITE" id="PS00301">
    <property type="entry name" value="G_TR_1"/>
    <property type="match status" value="1"/>
</dbReference>
<dbReference type="PROSITE" id="PS51722">
    <property type="entry name" value="G_TR_2"/>
    <property type="match status" value="1"/>
</dbReference>
<protein>
    <recommendedName>
        <fullName evidence="1">Elongation factor 4</fullName>
        <shortName evidence="1">EF-4</shortName>
        <ecNumber evidence="1">3.6.5.n1</ecNumber>
    </recommendedName>
    <alternativeName>
        <fullName evidence="1">Ribosomal back-translocase LepA</fullName>
    </alternativeName>
</protein>
<evidence type="ECO:0000255" key="1">
    <source>
        <dbReference type="HAMAP-Rule" id="MF_00071"/>
    </source>
</evidence>
<name>LEPA_LACLM</name>
<sequence>MNLQEMNARKEKIRNFSIIAHIDHGKSTLADRILEQTETVSKREMQAQLLDSMDLERERGITIKLNAIELNYKAKDGETYIFHLIDTPGHVDFTYEVSRSLAACEGAILVVDAAQGIEAQTLANVYLALDNDLEILPVINKIDLPAADPEMVRQEIEDVIGLDASEAVLASAKAGIGIEEILEQIVEKVPAPQGEVDAPLKALIFDSVYDAYRGVILQIRVIDGSVKVGDRIQLMSNGKEFDVTEVGIFTPKAVSRDFLMAGDVGYVAAAIKTVADTRVGDTVTLASNPATEALEGYKEMNPMVFAGIYPIESNKFNDLREALEKLQLNDASLRFEPETSQALGFGFRCGFLGLLHMDVIQERLEREFGIDLIMTAPSVVYHINTTDGETLEVANPSEFPDPTRIENIEEPFVKAQIMVPNDFVGPVMELAQRKRGIFLTMDYLDANRVNIIYHIPLSEIVFDFFDKLKSSTKGYASFDYEISDYRPSNLVKMDILLNAEKVDALSFIVHKDFAFERGKVIVEKLKKLIPRQQFEVPIQATIGNKIVARSDIKALRKNVLAKCYGGDISRKRKLLEKQKAGKKRMKAIGSVEVPQEAFLSVLSMDEE</sequence>
<gene>
    <name evidence="1" type="primary">lepA</name>
    <name type="ordered locus">llmg_1463</name>
</gene>
<keyword id="KW-1003">Cell membrane</keyword>
<keyword id="KW-0342">GTP-binding</keyword>
<keyword id="KW-0378">Hydrolase</keyword>
<keyword id="KW-0472">Membrane</keyword>
<keyword id="KW-0547">Nucleotide-binding</keyword>
<keyword id="KW-0648">Protein biosynthesis</keyword>
<feature type="chain" id="PRO_1000032012" description="Elongation factor 4">
    <location>
        <begin position="1"/>
        <end position="607"/>
    </location>
</feature>
<feature type="domain" description="tr-type G">
    <location>
        <begin position="11"/>
        <end position="193"/>
    </location>
</feature>
<feature type="binding site" evidence="1">
    <location>
        <begin position="23"/>
        <end position="28"/>
    </location>
    <ligand>
        <name>GTP</name>
        <dbReference type="ChEBI" id="CHEBI:37565"/>
    </ligand>
</feature>
<feature type="binding site" evidence="1">
    <location>
        <begin position="140"/>
        <end position="143"/>
    </location>
    <ligand>
        <name>GTP</name>
        <dbReference type="ChEBI" id="CHEBI:37565"/>
    </ligand>
</feature>
<comment type="function">
    <text evidence="1">Required for accurate and efficient protein synthesis under certain stress conditions. May act as a fidelity factor of the translation reaction, by catalyzing a one-codon backward translocation of tRNAs on improperly translocated ribosomes. Back-translocation proceeds from a post-translocation (POST) complex to a pre-translocation (PRE) complex, thus giving elongation factor G a second chance to translocate the tRNAs correctly. Binds to ribosomes in a GTP-dependent manner.</text>
</comment>
<comment type="catalytic activity">
    <reaction evidence="1">
        <text>GTP + H2O = GDP + phosphate + H(+)</text>
        <dbReference type="Rhea" id="RHEA:19669"/>
        <dbReference type="ChEBI" id="CHEBI:15377"/>
        <dbReference type="ChEBI" id="CHEBI:15378"/>
        <dbReference type="ChEBI" id="CHEBI:37565"/>
        <dbReference type="ChEBI" id="CHEBI:43474"/>
        <dbReference type="ChEBI" id="CHEBI:58189"/>
        <dbReference type="EC" id="3.6.5.n1"/>
    </reaction>
</comment>
<comment type="subcellular location">
    <subcellularLocation>
        <location evidence="1">Cell membrane</location>
        <topology evidence="1">Peripheral membrane protein</topology>
        <orientation evidence="1">Cytoplasmic side</orientation>
    </subcellularLocation>
</comment>
<comment type="similarity">
    <text evidence="1">Belongs to the TRAFAC class translation factor GTPase superfamily. Classic translation factor GTPase family. LepA subfamily.</text>
</comment>
<proteinExistence type="inferred from homology"/>